<gene>
    <name evidence="4" type="primary">CYP098</name>
    <name evidence="4" type="synonym">CYP5144K1v1</name>
</gene>
<dbReference type="EC" id="1.-.-.-" evidence="3"/>
<dbReference type="EMBL" id="AB573302">
    <property type="protein sequence ID" value="BAK09435.1"/>
    <property type="molecule type" value="mRNA"/>
</dbReference>
<dbReference type="SMR" id="F1SY91"/>
<dbReference type="GO" id="GO:0016020">
    <property type="term" value="C:membrane"/>
    <property type="evidence" value="ECO:0007669"/>
    <property type="project" value="UniProtKB-SubCell"/>
</dbReference>
<dbReference type="GO" id="GO:0020037">
    <property type="term" value="F:heme binding"/>
    <property type="evidence" value="ECO:0007669"/>
    <property type="project" value="InterPro"/>
</dbReference>
<dbReference type="GO" id="GO:0005506">
    <property type="term" value="F:iron ion binding"/>
    <property type="evidence" value="ECO:0007669"/>
    <property type="project" value="InterPro"/>
</dbReference>
<dbReference type="GO" id="GO:0004497">
    <property type="term" value="F:monooxygenase activity"/>
    <property type="evidence" value="ECO:0007669"/>
    <property type="project" value="UniProtKB-KW"/>
</dbReference>
<dbReference type="GO" id="GO:0016705">
    <property type="term" value="F:oxidoreductase activity, acting on paired donors, with incorporation or reduction of molecular oxygen"/>
    <property type="evidence" value="ECO:0007669"/>
    <property type="project" value="InterPro"/>
</dbReference>
<dbReference type="CDD" id="cd11065">
    <property type="entry name" value="CYP64-like"/>
    <property type="match status" value="1"/>
</dbReference>
<dbReference type="Gene3D" id="1.10.630.10">
    <property type="entry name" value="Cytochrome P450"/>
    <property type="match status" value="1"/>
</dbReference>
<dbReference type="InterPro" id="IPR001128">
    <property type="entry name" value="Cyt_P450"/>
</dbReference>
<dbReference type="InterPro" id="IPR017972">
    <property type="entry name" value="Cyt_P450_CS"/>
</dbReference>
<dbReference type="InterPro" id="IPR002401">
    <property type="entry name" value="Cyt_P450_E_grp-I"/>
</dbReference>
<dbReference type="InterPro" id="IPR036396">
    <property type="entry name" value="Cyt_P450_sf"/>
</dbReference>
<dbReference type="InterPro" id="IPR050364">
    <property type="entry name" value="Cytochrome_P450_fung"/>
</dbReference>
<dbReference type="PANTHER" id="PTHR46300:SF7">
    <property type="entry name" value="P450, PUTATIVE (EUROFUNG)-RELATED"/>
    <property type="match status" value="1"/>
</dbReference>
<dbReference type="PANTHER" id="PTHR46300">
    <property type="entry name" value="P450, PUTATIVE (EUROFUNG)-RELATED-RELATED"/>
    <property type="match status" value="1"/>
</dbReference>
<dbReference type="Pfam" id="PF00067">
    <property type="entry name" value="p450"/>
    <property type="match status" value="1"/>
</dbReference>
<dbReference type="PRINTS" id="PR00463">
    <property type="entry name" value="EP450I"/>
</dbReference>
<dbReference type="PRINTS" id="PR00385">
    <property type="entry name" value="P450"/>
</dbReference>
<dbReference type="SUPFAM" id="SSF48264">
    <property type="entry name" value="Cytochrome P450"/>
    <property type="match status" value="1"/>
</dbReference>
<dbReference type="PROSITE" id="PS00086">
    <property type="entry name" value="CYTOCHROME_P450"/>
    <property type="match status" value="1"/>
</dbReference>
<feature type="chain" id="PRO_0000451395" description="Cytochrome P450 monooxygenase 98">
    <location>
        <begin position="1"/>
        <end position="520"/>
    </location>
</feature>
<feature type="transmembrane region" description="Helical" evidence="2">
    <location>
        <begin position="7"/>
        <end position="27"/>
    </location>
</feature>
<feature type="binding site" description="axial binding residue" evidence="1">
    <location>
        <position position="445"/>
    </location>
    <ligand>
        <name>heme</name>
        <dbReference type="ChEBI" id="CHEBI:30413"/>
    </ligand>
    <ligandPart>
        <name>Fe</name>
        <dbReference type="ChEBI" id="CHEBI:18248"/>
    </ligandPart>
</feature>
<organism>
    <name type="scientific">Postia placenta (strain ATCC 44394 / Madison 698-R)</name>
    <name type="common">Brown rot fungus</name>
    <name type="synonym">Poria monticola</name>
    <dbReference type="NCBI Taxonomy" id="561896"/>
    <lineage>
        <taxon>Eukaryota</taxon>
        <taxon>Fungi</taxon>
        <taxon>Dikarya</taxon>
        <taxon>Basidiomycota</taxon>
        <taxon>Agaricomycotina</taxon>
        <taxon>Agaricomycetes</taxon>
        <taxon>Polyporales</taxon>
        <taxon>Adustoporiaceae</taxon>
        <taxon>Rhodonia</taxon>
    </lineage>
</organism>
<name>CY098_POSPM</name>
<proteinExistence type="evidence at protein level"/>
<evidence type="ECO:0000250" key="1">
    <source>
        <dbReference type="UniProtKB" id="P04798"/>
    </source>
</evidence>
<evidence type="ECO:0000255" key="2"/>
<evidence type="ECO:0000269" key="3">
    <source>
    </source>
</evidence>
<evidence type="ECO:0000303" key="4">
    <source>
    </source>
</evidence>
<evidence type="ECO:0000305" key="5"/>
<accession>F1SY91</accession>
<protein>
    <recommendedName>
        <fullName evidence="4">Cytochrome P450 monooxygenase 98</fullName>
        <ecNumber evidence="3">1.-.-.-</ecNumber>
    </recommendedName>
</protein>
<comment type="function">
    <text evidence="3">Cytochrome P450 monooxygenase that is able to use pyrene, phenanthrene, 3,5-dimethoxy-trans-stilbene and 3,5,4'-trimethoxy-trans-stilbene as substrates for oxidation.</text>
</comment>
<comment type="cofactor">
    <cofactor evidence="1">
        <name>heme</name>
        <dbReference type="ChEBI" id="CHEBI:30413"/>
    </cofactor>
</comment>
<comment type="pathway">
    <text evidence="5">Secondary metabolite biosynthesis.</text>
</comment>
<comment type="subcellular location">
    <subcellularLocation>
        <location evidence="2">Membrane</location>
        <topology evidence="2">Single-pass membrane protein</topology>
    </subcellularLocation>
</comment>
<comment type="similarity">
    <text evidence="5">Belongs to the cytochrome P450 family.</text>
</comment>
<keyword id="KW-0349">Heme</keyword>
<keyword id="KW-0408">Iron</keyword>
<keyword id="KW-0472">Membrane</keyword>
<keyword id="KW-0479">Metal-binding</keyword>
<keyword id="KW-0503">Monooxygenase</keyword>
<keyword id="KW-0560">Oxidoreductase</keyword>
<keyword id="KW-0812">Transmembrane</keyword>
<keyword id="KW-1133">Transmembrane helix</keyword>
<sequence length="520" mass="57665">MPTTLRMLNNNLLIVIGTFAVCVYIVLQRSKARLPLPPGPRKWPLIGNLLDMPGGRAWLKYAEWSREYGSDIIHLSAAGTSILVLNSAELVNELMEKRSAIYSSRAQLTMLHELMGWKDAFSFAPTNPTWRAQRKIFMQALNPNNAALFHGKQLRATHELLWRLHKGPANLFHELHHWAAILIMDITYGIRGDAADPYIETAVEALDSMAIAGAPGAFLVDAVPLLRHMPEWTPGAGFKRQAREWNVLRQKMANRPFIAAKQQITSGSYTPSLVSNALEAVDKNQDLAEQEELIKGAAVTSYGGGSDTVVAAVSAFVLAILQHPEIQAKAQRQLDEVLGHGELPSFQDVQSLPYITALVKEVLRHNPVTPLAIPHLLSEDDTWDGYWLPKGSIVMANAWAILHDENTYPDPMPFNPDRFLRPDGKLDETVKDPATASFGFGRRLCPGRHIALSSIWISVASILACYVIRKEVDAAGREVVPDGEWYGGPTLFNRPLPFKCRFTPRSKAAEAIIVSLENTV</sequence>
<reference key="1">
    <citation type="journal article" date="2012" name="Arch. Microbiol.">
        <title>Molecular identification and functional characterization of cytochrome P450 monooxygenases from the brown-rot basidiomycete Postia placenta.</title>
        <authorList>
            <person name="Ide M."/>
            <person name="Ichinose H."/>
            <person name="Wariishi H."/>
        </authorList>
    </citation>
    <scope>NUCLEOTIDE SEQUENCE [MRNA]</scope>
    <scope>IDENTIFICATION</scope>
    <scope>FUNCTION</scope>
    <scope>CATALYTIC ACTIVITY</scope>
    <source>
        <strain>ATCC 44394 / Madison 698-R</strain>
    </source>
</reference>